<accession>B7I5I9</accession>
<sequence length="338" mass="36853">MQIFYDKDCDLSIIQSKKVAIIGYGSQGHAHALNLKDSGVDVTVGLRAGSASWKKAENAGLKVAEVPAAVKQADLVMILTPDEFQSQLYRDVIEPNIKEGATLAFAHGFSVLYNQVVPRKDLDVIMVAPKAPGHTVRSEFQRGSGVPDLIAIHQDASGNARNVALSYASGVGGGRTGIIETSFREETETDLFGEQAVLCGGAVELVKMGFETLVEAGYAPEMAYFECLHELKLIVDLMFEGGIADMNYSVSNNAEYGEYVTGPEVINEQSREAMRNALKRIQSGEYAKMFIQEGALNYPSMTARRRQNAAHGIEQTGAKLRAMMPWIQANKIVDKEKN</sequence>
<organism>
    <name type="scientific">Acinetobacter baumannii (strain AB0057)</name>
    <dbReference type="NCBI Taxonomy" id="480119"/>
    <lineage>
        <taxon>Bacteria</taxon>
        <taxon>Pseudomonadati</taxon>
        <taxon>Pseudomonadota</taxon>
        <taxon>Gammaproteobacteria</taxon>
        <taxon>Moraxellales</taxon>
        <taxon>Moraxellaceae</taxon>
        <taxon>Acinetobacter</taxon>
        <taxon>Acinetobacter calcoaceticus/baumannii complex</taxon>
    </lineage>
</organism>
<evidence type="ECO:0000255" key="1">
    <source>
        <dbReference type="HAMAP-Rule" id="MF_00435"/>
    </source>
</evidence>
<evidence type="ECO:0000255" key="2">
    <source>
        <dbReference type="PROSITE-ProRule" id="PRU01197"/>
    </source>
</evidence>
<evidence type="ECO:0000255" key="3">
    <source>
        <dbReference type="PROSITE-ProRule" id="PRU01198"/>
    </source>
</evidence>
<dbReference type="EC" id="1.1.1.86" evidence="1"/>
<dbReference type="EMBL" id="CP001182">
    <property type="protein sequence ID" value="ACJ40047.1"/>
    <property type="molecule type" value="Genomic_DNA"/>
</dbReference>
<dbReference type="RefSeq" id="WP_001165443.1">
    <property type="nucleotide sequence ID" value="NC_011586.2"/>
</dbReference>
<dbReference type="SMR" id="B7I5I9"/>
<dbReference type="GeneID" id="92892527"/>
<dbReference type="KEGG" id="abn:AB57_0626"/>
<dbReference type="HOGENOM" id="CLU_033821_0_1_6"/>
<dbReference type="UniPathway" id="UPA00047">
    <property type="reaction ID" value="UER00056"/>
</dbReference>
<dbReference type="UniPathway" id="UPA00049">
    <property type="reaction ID" value="UER00060"/>
</dbReference>
<dbReference type="Proteomes" id="UP000007094">
    <property type="component" value="Chromosome"/>
</dbReference>
<dbReference type="GO" id="GO:0005829">
    <property type="term" value="C:cytosol"/>
    <property type="evidence" value="ECO:0007669"/>
    <property type="project" value="TreeGrafter"/>
</dbReference>
<dbReference type="GO" id="GO:0004455">
    <property type="term" value="F:ketol-acid reductoisomerase activity"/>
    <property type="evidence" value="ECO:0007669"/>
    <property type="project" value="UniProtKB-UniRule"/>
</dbReference>
<dbReference type="GO" id="GO:0000287">
    <property type="term" value="F:magnesium ion binding"/>
    <property type="evidence" value="ECO:0007669"/>
    <property type="project" value="UniProtKB-UniRule"/>
</dbReference>
<dbReference type="GO" id="GO:0050661">
    <property type="term" value="F:NADP binding"/>
    <property type="evidence" value="ECO:0007669"/>
    <property type="project" value="InterPro"/>
</dbReference>
<dbReference type="GO" id="GO:0009097">
    <property type="term" value="P:isoleucine biosynthetic process"/>
    <property type="evidence" value="ECO:0007669"/>
    <property type="project" value="UniProtKB-UniRule"/>
</dbReference>
<dbReference type="GO" id="GO:0009099">
    <property type="term" value="P:L-valine biosynthetic process"/>
    <property type="evidence" value="ECO:0007669"/>
    <property type="project" value="UniProtKB-UniRule"/>
</dbReference>
<dbReference type="FunFam" id="3.40.50.720:FF:000023">
    <property type="entry name" value="Ketol-acid reductoisomerase (NADP(+))"/>
    <property type="match status" value="1"/>
</dbReference>
<dbReference type="Gene3D" id="6.10.240.10">
    <property type="match status" value="1"/>
</dbReference>
<dbReference type="Gene3D" id="3.40.50.720">
    <property type="entry name" value="NAD(P)-binding Rossmann-like Domain"/>
    <property type="match status" value="1"/>
</dbReference>
<dbReference type="HAMAP" id="MF_00435">
    <property type="entry name" value="IlvC"/>
    <property type="match status" value="1"/>
</dbReference>
<dbReference type="InterPro" id="IPR008927">
    <property type="entry name" value="6-PGluconate_DH-like_C_sf"/>
</dbReference>
<dbReference type="InterPro" id="IPR013023">
    <property type="entry name" value="KARI"/>
</dbReference>
<dbReference type="InterPro" id="IPR000506">
    <property type="entry name" value="KARI_C"/>
</dbReference>
<dbReference type="InterPro" id="IPR013116">
    <property type="entry name" value="KARI_N"/>
</dbReference>
<dbReference type="InterPro" id="IPR014359">
    <property type="entry name" value="KARI_prok"/>
</dbReference>
<dbReference type="InterPro" id="IPR036291">
    <property type="entry name" value="NAD(P)-bd_dom_sf"/>
</dbReference>
<dbReference type="NCBIfam" id="TIGR00465">
    <property type="entry name" value="ilvC"/>
    <property type="match status" value="1"/>
</dbReference>
<dbReference type="NCBIfam" id="NF004017">
    <property type="entry name" value="PRK05479.1"/>
    <property type="match status" value="1"/>
</dbReference>
<dbReference type="NCBIfam" id="NF009940">
    <property type="entry name" value="PRK13403.1"/>
    <property type="match status" value="1"/>
</dbReference>
<dbReference type="PANTHER" id="PTHR21371">
    <property type="entry name" value="KETOL-ACID REDUCTOISOMERASE, MITOCHONDRIAL"/>
    <property type="match status" value="1"/>
</dbReference>
<dbReference type="PANTHER" id="PTHR21371:SF1">
    <property type="entry name" value="KETOL-ACID REDUCTOISOMERASE, MITOCHONDRIAL"/>
    <property type="match status" value="1"/>
</dbReference>
<dbReference type="Pfam" id="PF01450">
    <property type="entry name" value="KARI_C"/>
    <property type="match status" value="1"/>
</dbReference>
<dbReference type="Pfam" id="PF07991">
    <property type="entry name" value="KARI_N"/>
    <property type="match status" value="1"/>
</dbReference>
<dbReference type="PIRSF" id="PIRSF000116">
    <property type="entry name" value="IlvC_gammaproteo"/>
    <property type="match status" value="1"/>
</dbReference>
<dbReference type="SUPFAM" id="SSF48179">
    <property type="entry name" value="6-phosphogluconate dehydrogenase C-terminal domain-like"/>
    <property type="match status" value="1"/>
</dbReference>
<dbReference type="SUPFAM" id="SSF51735">
    <property type="entry name" value="NAD(P)-binding Rossmann-fold domains"/>
    <property type="match status" value="1"/>
</dbReference>
<dbReference type="PROSITE" id="PS51851">
    <property type="entry name" value="KARI_C"/>
    <property type="match status" value="1"/>
</dbReference>
<dbReference type="PROSITE" id="PS51850">
    <property type="entry name" value="KARI_N"/>
    <property type="match status" value="1"/>
</dbReference>
<comment type="function">
    <text evidence="1">Involved in the biosynthesis of branched-chain amino acids (BCAA). Catalyzes an alkyl-migration followed by a ketol-acid reduction of (S)-2-acetolactate (S2AL) to yield (R)-2,3-dihydroxy-isovalerate. In the isomerase reaction, S2AL is rearranged via a Mg-dependent methyl migration to produce 3-hydroxy-3-methyl-2-ketobutyrate (HMKB). In the reductase reaction, this 2-ketoacid undergoes a metal-dependent reduction by NADPH to yield (R)-2,3-dihydroxy-isovalerate.</text>
</comment>
<comment type="catalytic activity">
    <reaction evidence="1">
        <text>(2R)-2,3-dihydroxy-3-methylbutanoate + NADP(+) = (2S)-2-acetolactate + NADPH + H(+)</text>
        <dbReference type="Rhea" id="RHEA:22068"/>
        <dbReference type="ChEBI" id="CHEBI:15378"/>
        <dbReference type="ChEBI" id="CHEBI:49072"/>
        <dbReference type="ChEBI" id="CHEBI:57783"/>
        <dbReference type="ChEBI" id="CHEBI:58349"/>
        <dbReference type="ChEBI" id="CHEBI:58476"/>
        <dbReference type="EC" id="1.1.1.86"/>
    </reaction>
</comment>
<comment type="catalytic activity">
    <reaction evidence="1">
        <text>(2R,3R)-2,3-dihydroxy-3-methylpentanoate + NADP(+) = (S)-2-ethyl-2-hydroxy-3-oxobutanoate + NADPH + H(+)</text>
        <dbReference type="Rhea" id="RHEA:13493"/>
        <dbReference type="ChEBI" id="CHEBI:15378"/>
        <dbReference type="ChEBI" id="CHEBI:49256"/>
        <dbReference type="ChEBI" id="CHEBI:49258"/>
        <dbReference type="ChEBI" id="CHEBI:57783"/>
        <dbReference type="ChEBI" id="CHEBI:58349"/>
        <dbReference type="EC" id="1.1.1.86"/>
    </reaction>
</comment>
<comment type="cofactor">
    <cofactor evidence="1">
        <name>Mg(2+)</name>
        <dbReference type="ChEBI" id="CHEBI:18420"/>
    </cofactor>
    <text evidence="1">Binds 2 magnesium ions per subunit.</text>
</comment>
<comment type="pathway">
    <text evidence="1">Amino-acid biosynthesis; L-isoleucine biosynthesis; L-isoleucine from 2-oxobutanoate: step 2/4.</text>
</comment>
<comment type="pathway">
    <text evidence="1">Amino-acid biosynthesis; L-valine biosynthesis; L-valine from pyruvate: step 2/4.</text>
</comment>
<comment type="similarity">
    <text evidence="1">Belongs to the ketol-acid reductoisomerase family.</text>
</comment>
<keyword id="KW-0028">Amino-acid biosynthesis</keyword>
<keyword id="KW-0100">Branched-chain amino acid biosynthesis</keyword>
<keyword id="KW-0460">Magnesium</keyword>
<keyword id="KW-0479">Metal-binding</keyword>
<keyword id="KW-0521">NADP</keyword>
<keyword id="KW-0560">Oxidoreductase</keyword>
<reference key="1">
    <citation type="journal article" date="2008" name="J. Bacteriol.">
        <title>Comparative genome sequence analysis of multidrug-resistant Acinetobacter baumannii.</title>
        <authorList>
            <person name="Adams M.D."/>
            <person name="Goglin K."/>
            <person name="Molyneaux N."/>
            <person name="Hujer K.M."/>
            <person name="Lavender H."/>
            <person name="Jamison J.J."/>
            <person name="MacDonald I.J."/>
            <person name="Martin K.M."/>
            <person name="Russo T."/>
            <person name="Campagnari A.A."/>
            <person name="Hujer A.M."/>
            <person name="Bonomo R.A."/>
            <person name="Gill S.R."/>
        </authorList>
    </citation>
    <scope>NUCLEOTIDE SEQUENCE [LARGE SCALE GENOMIC DNA]</scope>
    <source>
        <strain>AB0057</strain>
    </source>
</reference>
<feature type="chain" id="PRO_1000124241" description="Ketol-acid reductoisomerase (NADP(+))">
    <location>
        <begin position="1"/>
        <end position="338"/>
    </location>
</feature>
<feature type="domain" description="KARI N-terminal Rossmann" evidence="2">
    <location>
        <begin position="1"/>
        <end position="181"/>
    </location>
</feature>
<feature type="domain" description="KARI C-terminal knotted" evidence="3">
    <location>
        <begin position="182"/>
        <end position="327"/>
    </location>
</feature>
<feature type="active site" evidence="1">
    <location>
        <position position="107"/>
    </location>
</feature>
<feature type="binding site" evidence="1">
    <location>
        <begin position="24"/>
        <end position="27"/>
    </location>
    <ligand>
        <name>NADP(+)</name>
        <dbReference type="ChEBI" id="CHEBI:58349"/>
    </ligand>
</feature>
<feature type="binding site" evidence="1">
    <location>
        <position position="47"/>
    </location>
    <ligand>
        <name>NADP(+)</name>
        <dbReference type="ChEBI" id="CHEBI:58349"/>
    </ligand>
</feature>
<feature type="binding site" evidence="1">
    <location>
        <position position="50"/>
    </location>
    <ligand>
        <name>NADP(+)</name>
        <dbReference type="ChEBI" id="CHEBI:58349"/>
    </ligand>
</feature>
<feature type="binding site" evidence="1">
    <location>
        <position position="52"/>
    </location>
    <ligand>
        <name>NADP(+)</name>
        <dbReference type="ChEBI" id="CHEBI:58349"/>
    </ligand>
</feature>
<feature type="binding site" evidence="1">
    <location>
        <begin position="82"/>
        <end position="85"/>
    </location>
    <ligand>
        <name>NADP(+)</name>
        <dbReference type="ChEBI" id="CHEBI:58349"/>
    </ligand>
</feature>
<feature type="binding site" evidence="1">
    <location>
        <position position="133"/>
    </location>
    <ligand>
        <name>NADP(+)</name>
        <dbReference type="ChEBI" id="CHEBI:58349"/>
    </ligand>
</feature>
<feature type="binding site" evidence="1">
    <location>
        <position position="190"/>
    </location>
    <ligand>
        <name>Mg(2+)</name>
        <dbReference type="ChEBI" id="CHEBI:18420"/>
        <label>1</label>
    </ligand>
</feature>
<feature type="binding site" evidence="1">
    <location>
        <position position="190"/>
    </location>
    <ligand>
        <name>Mg(2+)</name>
        <dbReference type="ChEBI" id="CHEBI:18420"/>
        <label>2</label>
    </ligand>
</feature>
<feature type="binding site" evidence="1">
    <location>
        <position position="194"/>
    </location>
    <ligand>
        <name>Mg(2+)</name>
        <dbReference type="ChEBI" id="CHEBI:18420"/>
        <label>1</label>
    </ligand>
</feature>
<feature type="binding site" evidence="1">
    <location>
        <position position="226"/>
    </location>
    <ligand>
        <name>Mg(2+)</name>
        <dbReference type="ChEBI" id="CHEBI:18420"/>
        <label>2</label>
    </ligand>
</feature>
<feature type="binding site" evidence="1">
    <location>
        <position position="230"/>
    </location>
    <ligand>
        <name>Mg(2+)</name>
        <dbReference type="ChEBI" id="CHEBI:18420"/>
        <label>2</label>
    </ligand>
</feature>
<feature type="binding site" evidence="1">
    <location>
        <position position="251"/>
    </location>
    <ligand>
        <name>substrate</name>
    </ligand>
</feature>
<protein>
    <recommendedName>
        <fullName evidence="1">Ketol-acid reductoisomerase (NADP(+))</fullName>
        <shortName evidence="1">KARI</shortName>
        <ecNumber evidence="1">1.1.1.86</ecNumber>
    </recommendedName>
    <alternativeName>
        <fullName evidence="1">Acetohydroxy-acid isomeroreductase</fullName>
        <shortName evidence="1">AHIR</shortName>
    </alternativeName>
    <alternativeName>
        <fullName evidence="1">Alpha-keto-beta-hydroxylacyl reductoisomerase</fullName>
    </alternativeName>
    <alternativeName>
        <fullName evidence="1">Ketol-acid reductoisomerase type 1</fullName>
    </alternativeName>
    <alternativeName>
        <fullName evidence="1">Ketol-acid reductoisomerase type I</fullName>
    </alternativeName>
</protein>
<name>ILVC_ACIB5</name>
<proteinExistence type="inferred from homology"/>
<gene>
    <name evidence="1" type="primary">ilvC</name>
    <name type="ordered locus">AB57_0626</name>
</gene>